<gene>
    <name evidence="1" type="primary">rplR</name>
    <name type="ordered locus">EcolC_0409</name>
</gene>
<name>RL18_ECOLC</name>
<keyword id="KW-0687">Ribonucleoprotein</keyword>
<keyword id="KW-0689">Ribosomal protein</keyword>
<keyword id="KW-0694">RNA-binding</keyword>
<keyword id="KW-0699">rRNA-binding</keyword>
<proteinExistence type="inferred from homology"/>
<accession>B1IPZ5</accession>
<reference key="1">
    <citation type="submission" date="2008-02" db="EMBL/GenBank/DDBJ databases">
        <title>Complete sequence of Escherichia coli C str. ATCC 8739.</title>
        <authorList>
            <person name="Copeland A."/>
            <person name="Lucas S."/>
            <person name="Lapidus A."/>
            <person name="Glavina del Rio T."/>
            <person name="Dalin E."/>
            <person name="Tice H."/>
            <person name="Bruce D."/>
            <person name="Goodwin L."/>
            <person name="Pitluck S."/>
            <person name="Kiss H."/>
            <person name="Brettin T."/>
            <person name="Detter J.C."/>
            <person name="Han C."/>
            <person name="Kuske C.R."/>
            <person name="Schmutz J."/>
            <person name="Larimer F."/>
            <person name="Land M."/>
            <person name="Hauser L."/>
            <person name="Kyrpides N."/>
            <person name="Mikhailova N."/>
            <person name="Ingram L."/>
            <person name="Richardson P."/>
        </authorList>
    </citation>
    <scope>NUCLEOTIDE SEQUENCE [LARGE SCALE GENOMIC DNA]</scope>
    <source>
        <strain>ATCC 8739 / DSM 1576 / NBRC 3972 / NCIMB 8545 / WDCM 00012 / Crooks</strain>
    </source>
</reference>
<organism>
    <name type="scientific">Escherichia coli (strain ATCC 8739 / DSM 1576 / NBRC 3972 / NCIMB 8545 / WDCM 00012 / Crooks)</name>
    <dbReference type="NCBI Taxonomy" id="481805"/>
    <lineage>
        <taxon>Bacteria</taxon>
        <taxon>Pseudomonadati</taxon>
        <taxon>Pseudomonadota</taxon>
        <taxon>Gammaproteobacteria</taxon>
        <taxon>Enterobacterales</taxon>
        <taxon>Enterobacteriaceae</taxon>
        <taxon>Escherichia</taxon>
    </lineage>
</organism>
<protein>
    <recommendedName>
        <fullName evidence="1">Large ribosomal subunit protein uL18</fullName>
    </recommendedName>
    <alternativeName>
        <fullName evidence="2">50S ribosomal protein L18</fullName>
    </alternativeName>
</protein>
<sequence length="117" mass="12770">MDKKSARIRRATRARRKLQELGATRLVVHRTPRHIYAQVIAPNGSEVLVAASTVEKAIAEQLKYTGNKDAAAAVGKAVAERALEKGIKDVSFDRSGFQYHGRVQALADAAREAGLQF</sequence>
<feature type="chain" id="PRO_1000086664" description="Large ribosomal subunit protein uL18">
    <location>
        <begin position="1"/>
        <end position="117"/>
    </location>
</feature>
<dbReference type="EMBL" id="CP000946">
    <property type="protein sequence ID" value="ACA76087.1"/>
    <property type="molecule type" value="Genomic_DNA"/>
</dbReference>
<dbReference type="RefSeq" id="WP_000358960.1">
    <property type="nucleotide sequence ID" value="NZ_MTFT01000014.1"/>
</dbReference>
<dbReference type="SMR" id="B1IPZ5"/>
<dbReference type="GeneID" id="98390426"/>
<dbReference type="KEGG" id="ecl:EcolC_0409"/>
<dbReference type="HOGENOM" id="CLU_098841_0_1_6"/>
<dbReference type="GO" id="GO:0022625">
    <property type="term" value="C:cytosolic large ribosomal subunit"/>
    <property type="evidence" value="ECO:0007669"/>
    <property type="project" value="TreeGrafter"/>
</dbReference>
<dbReference type="GO" id="GO:0008097">
    <property type="term" value="F:5S rRNA binding"/>
    <property type="evidence" value="ECO:0007669"/>
    <property type="project" value="TreeGrafter"/>
</dbReference>
<dbReference type="GO" id="GO:0003735">
    <property type="term" value="F:structural constituent of ribosome"/>
    <property type="evidence" value="ECO:0007669"/>
    <property type="project" value="InterPro"/>
</dbReference>
<dbReference type="GO" id="GO:0006412">
    <property type="term" value="P:translation"/>
    <property type="evidence" value="ECO:0007669"/>
    <property type="project" value="UniProtKB-UniRule"/>
</dbReference>
<dbReference type="CDD" id="cd00432">
    <property type="entry name" value="Ribosomal_L18_L5e"/>
    <property type="match status" value="1"/>
</dbReference>
<dbReference type="FunFam" id="3.30.420.100:FF:000001">
    <property type="entry name" value="50S ribosomal protein L18"/>
    <property type="match status" value="1"/>
</dbReference>
<dbReference type="Gene3D" id="3.30.420.100">
    <property type="match status" value="1"/>
</dbReference>
<dbReference type="HAMAP" id="MF_01337_B">
    <property type="entry name" value="Ribosomal_uL18_B"/>
    <property type="match status" value="1"/>
</dbReference>
<dbReference type="InterPro" id="IPR004389">
    <property type="entry name" value="Ribosomal_uL18_bac-type"/>
</dbReference>
<dbReference type="InterPro" id="IPR005484">
    <property type="entry name" value="Ribosomal_uL18_bac/euk"/>
</dbReference>
<dbReference type="NCBIfam" id="TIGR00060">
    <property type="entry name" value="L18_bact"/>
    <property type="match status" value="1"/>
</dbReference>
<dbReference type="PANTHER" id="PTHR12899">
    <property type="entry name" value="39S RIBOSOMAL PROTEIN L18, MITOCHONDRIAL"/>
    <property type="match status" value="1"/>
</dbReference>
<dbReference type="PANTHER" id="PTHR12899:SF3">
    <property type="entry name" value="LARGE RIBOSOMAL SUBUNIT PROTEIN UL18M"/>
    <property type="match status" value="1"/>
</dbReference>
<dbReference type="Pfam" id="PF00861">
    <property type="entry name" value="Ribosomal_L18p"/>
    <property type="match status" value="1"/>
</dbReference>
<dbReference type="SUPFAM" id="SSF53137">
    <property type="entry name" value="Translational machinery components"/>
    <property type="match status" value="1"/>
</dbReference>
<comment type="function">
    <text evidence="1">This is one of the proteins that bind and probably mediate the attachment of the 5S RNA into the large ribosomal subunit, where it forms part of the central protuberance.</text>
</comment>
<comment type="subunit">
    <text evidence="1">Part of the 50S ribosomal subunit; part of the 5S rRNA/L5/L18/L25 subcomplex. Contacts the 5S and 23S rRNAs.</text>
</comment>
<comment type="similarity">
    <text evidence="1">Belongs to the universal ribosomal protein uL18 family.</text>
</comment>
<evidence type="ECO:0000255" key="1">
    <source>
        <dbReference type="HAMAP-Rule" id="MF_01337"/>
    </source>
</evidence>
<evidence type="ECO:0000305" key="2"/>